<evidence type="ECO:0000250" key="1">
    <source>
        <dbReference type="UniProtKB" id="Q13277"/>
    </source>
</evidence>
<evidence type="ECO:0000250" key="2">
    <source>
        <dbReference type="UniProtKB" id="Q64704"/>
    </source>
</evidence>
<evidence type="ECO:0000255" key="3"/>
<evidence type="ECO:0000255" key="4">
    <source>
        <dbReference type="PROSITE-ProRule" id="PRU00202"/>
    </source>
</evidence>
<evidence type="ECO:0000305" key="5"/>
<name>STX3_RAT</name>
<protein>
    <recommendedName>
        <fullName>Syntaxin-3</fullName>
    </recommendedName>
</protein>
<organism>
    <name type="scientific">Rattus norvegicus</name>
    <name type="common">Rat</name>
    <dbReference type="NCBI Taxonomy" id="10116"/>
    <lineage>
        <taxon>Eukaryota</taxon>
        <taxon>Metazoa</taxon>
        <taxon>Chordata</taxon>
        <taxon>Craniata</taxon>
        <taxon>Vertebrata</taxon>
        <taxon>Euteleostomi</taxon>
        <taxon>Mammalia</taxon>
        <taxon>Eutheria</taxon>
        <taxon>Euarchontoglires</taxon>
        <taxon>Glires</taxon>
        <taxon>Rodentia</taxon>
        <taxon>Myomorpha</taxon>
        <taxon>Muroidea</taxon>
        <taxon>Muridae</taxon>
        <taxon>Murinae</taxon>
        <taxon>Rattus</taxon>
    </lineage>
</organism>
<proteinExistence type="evidence at protein level"/>
<keyword id="KW-0175">Coiled coil</keyword>
<keyword id="KW-0472">Membrane</keyword>
<keyword id="KW-0532">Neurotransmitter transport</keyword>
<keyword id="KW-1185">Reference proteome</keyword>
<keyword id="KW-0812">Transmembrane</keyword>
<keyword id="KW-1133">Transmembrane helix</keyword>
<keyword id="KW-0813">Transport</keyword>
<feature type="chain" id="PRO_0000210201" description="Syntaxin-3">
    <location>
        <begin position="1"/>
        <end position="289"/>
    </location>
</feature>
<feature type="topological domain" description="Cytoplasmic" evidence="3">
    <location>
        <begin position="1"/>
        <end position="263"/>
    </location>
</feature>
<feature type="transmembrane region" description="Helical; Anchor for type IV membrane protein" evidence="3">
    <location>
        <begin position="264"/>
        <end position="284"/>
    </location>
</feature>
<feature type="topological domain" description="Extracellular" evidence="3">
    <location>
        <begin position="285"/>
        <end position="289"/>
    </location>
</feature>
<feature type="domain" description="t-SNARE coiled-coil homology" evidence="4">
    <location>
        <begin position="191"/>
        <end position="253"/>
    </location>
</feature>
<feature type="coiled-coil region" evidence="3">
    <location>
        <begin position="32"/>
        <end position="111"/>
    </location>
</feature>
<dbReference type="EMBL" id="L20820">
    <property type="protein sequence ID" value="AAA03045.1"/>
    <property type="molecule type" value="mRNA"/>
</dbReference>
<dbReference type="PIR" id="D48213">
    <property type="entry name" value="D48213"/>
</dbReference>
<dbReference type="RefSeq" id="NP_112386.1">
    <property type="nucleotide sequence ID" value="NM_031124.3"/>
</dbReference>
<dbReference type="RefSeq" id="XP_017445263.1">
    <property type="nucleotide sequence ID" value="XM_017589774.1"/>
</dbReference>
<dbReference type="RefSeq" id="XP_063131336.1">
    <property type="nucleotide sequence ID" value="XM_063275266.1"/>
</dbReference>
<dbReference type="SMR" id="Q08849"/>
<dbReference type="BioGRID" id="249660">
    <property type="interactions" value="4"/>
</dbReference>
<dbReference type="CORUM" id="Q08849"/>
<dbReference type="FunCoup" id="Q08849">
    <property type="interactions" value="778"/>
</dbReference>
<dbReference type="IntAct" id="Q08849">
    <property type="interactions" value="3"/>
</dbReference>
<dbReference type="MINT" id="Q08849"/>
<dbReference type="STRING" id="10116.ENSRNOP00000028535"/>
<dbReference type="iPTMnet" id="Q08849"/>
<dbReference type="PhosphoSitePlus" id="Q08849"/>
<dbReference type="PaxDb" id="10116-ENSRNOP00000028535"/>
<dbReference type="Ensembl" id="ENSRNOT00000028535.6">
    <property type="protein sequence ID" value="ENSRNOP00000028535.4"/>
    <property type="gene ID" value="ENSRNOG00000021013.8"/>
</dbReference>
<dbReference type="GeneID" id="81802"/>
<dbReference type="KEGG" id="rno:81802"/>
<dbReference type="UCSC" id="RGD:621005">
    <property type="organism name" value="rat"/>
</dbReference>
<dbReference type="AGR" id="RGD:621005"/>
<dbReference type="CTD" id="6809"/>
<dbReference type="RGD" id="621005">
    <property type="gene designation" value="Stx3"/>
</dbReference>
<dbReference type="eggNOG" id="KOG0810">
    <property type="taxonomic scope" value="Eukaryota"/>
</dbReference>
<dbReference type="GeneTree" id="ENSGT01030000234627"/>
<dbReference type="HOGENOM" id="CLU_042423_2_2_1"/>
<dbReference type="InParanoid" id="Q08849"/>
<dbReference type="OrthoDB" id="10255013at2759"/>
<dbReference type="PhylomeDB" id="Q08849"/>
<dbReference type="TreeFam" id="TF313763"/>
<dbReference type="Reactome" id="R-RNO-449836">
    <property type="pathway name" value="Other interleukin signaling"/>
</dbReference>
<dbReference type="PRO" id="PR:Q08849"/>
<dbReference type="Proteomes" id="UP000002494">
    <property type="component" value="Chromosome 1"/>
</dbReference>
<dbReference type="Bgee" id="ENSRNOG00000021013">
    <property type="expression patterns" value="Expressed in duodenum and 17 other cell types or tissues"/>
</dbReference>
<dbReference type="ExpressionAtlas" id="Q08849">
    <property type="expression patterns" value="baseline and differential"/>
</dbReference>
<dbReference type="GO" id="GO:0016324">
    <property type="term" value="C:apical plasma membrane"/>
    <property type="evidence" value="ECO:0000266"/>
    <property type="project" value="RGD"/>
</dbReference>
<dbReference type="GO" id="GO:0042582">
    <property type="term" value="C:azurophil granule"/>
    <property type="evidence" value="ECO:0000266"/>
    <property type="project" value="RGD"/>
</dbReference>
<dbReference type="GO" id="GO:0005911">
    <property type="term" value="C:cell-cell junction"/>
    <property type="evidence" value="ECO:0000266"/>
    <property type="project" value="RGD"/>
</dbReference>
<dbReference type="GO" id="GO:0030425">
    <property type="term" value="C:dendrite"/>
    <property type="evidence" value="ECO:0000266"/>
    <property type="project" value="RGD"/>
</dbReference>
<dbReference type="GO" id="GO:0012505">
    <property type="term" value="C:endomembrane system"/>
    <property type="evidence" value="ECO:0000318"/>
    <property type="project" value="GO_Central"/>
</dbReference>
<dbReference type="GO" id="GO:0098978">
    <property type="term" value="C:glutamatergic synapse"/>
    <property type="evidence" value="ECO:0000266"/>
    <property type="project" value="RGD"/>
</dbReference>
<dbReference type="GO" id="GO:0030426">
    <property type="term" value="C:growth cone"/>
    <property type="evidence" value="ECO:0000314"/>
    <property type="project" value="HGNC-UCL"/>
</dbReference>
<dbReference type="GO" id="GO:0030027">
    <property type="term" value="C:lamellipodium"/>
    <property type="evidence" value="ECO:0000266"/>
    <property type="project" value="RGD"/>
</dbReference>
<dbReference type="GO" id="GO:0042470">
    <property type="term" value="C:melanosome"/>
    <property type="evidence" value="ECO:0000266"/>
    <property type="project" value="RGD"/>
</dbReference>
<dbReference type="GO" id="GO:0016020">
    <property type="term" value="C:membrane"/>
    <property type="evidence" value="ECO:0000266"/>
    <property type="project" value="RGD"/>
</dbReference>
<dbReference type="GO" id="GO:0043005">
    <property type="term" value="C:neuron projection"/>
    <property type="evidence" value="ECO:0000314"/>
    <property type="project" value="HGNC-UCL"/>
</dbReference>
<dbReference type="GO" id="GO:0001917">
    <property type="term" value="C:photoreceptor inner segment"/>
    <property type="evidence" value="ECO:0000250"/>
    <property type="project" value="UniProtKB"/>
</dbReference>
<dbReference type="GO" id="GO:0001750">
    <property type="term" value="C:photoreceptor outer segment"/>
    <property type="evidence" value="ECO:0000250"/>
    <property type="project" value="UniProtKB"/>
</dbReference>
<dbReference type="GO" id="GO:0005886">
    <property type="term" value="C:plasma membrane"/>
    <property type="evidence" value="ECO:0000314"/>
    <property type="project" value="BHF-UCL"/>
</dbReference>
<dbReference type="GO" id="GO:0098794">
    <property type="term" value="C:postsynapse"/>
    <property type="evidence" value="ECO:0000266"/>
    <property type="project" value="RGD"/>
</dbReference>
<dbReference type="GO" id="GO:0098793">
    <property type="term" value="C:presynapse"/>
    <property type="evidence" value="ECO:0000266"/>
    <property type="project" value="RGD"/>
</dbReference>
<dbReference type="GO" id="GO:0098685">
    <property type="term" value="C:Schaffer collateral - CA1 synapse"/>
    <property type="evidence" value="ECO:0000266"/>
    <property type="project" value="RGD"/>
</dbReference>
<dbReference type="GO" id="GO:0030141">
    <property type="term" value="C:secretory granule"/>
    <property type="evidence" value="ECO:0000266"/>
    <property type="project" value="RGD"/>
</dbReference>
<dbReference type="GO" id="GO:0031201">
    <property type="term" value="C:SNARE complex"/>
    <property type="evidence" value="ECO:0000314"/>
    <property type="project" value="HGNC-UCL"/>
</dbReference>
<dbReference type="GO" id="GO:0042581">
    <property type="term" value="C:specific granule"/>
    <property type="evidence" value="ECO:0000266"/>
    <property type="project" value="RGD"/>
</dbReference>
<dbReference type="GO" id="GO:0042589">
    <property type="term" value="C:zymogen granule membrane"/>
    <property type="evidence" value="ECO:0000266"/>
    <property type="project" value="RGD"/>
</dbReference>
<dbReference type="GO" id="GO:0050544">
    <property type="term" value="F:arachidonate binding"/>
    <property type="evidence" value="ECO:0000314"/>
    <property type="project" value="HGNC-UCL"/>
</dbReference>
<dbReference type="GO" id="GO:0005484">
    <property type="term" value="F:SNAP receptor activity"/>
    <property type="evidence" value="ECO:0000314"/>
    <property type="project" value="FlyBase"/>
</dbReference>
<dbReference type="GO" id="GO:0000149">
    <property type="term" value="F:SNARE binding"/>
    <property type="evidence" value="ECO:0000318"/>
    <property type="project" value="GO_Central"/>
</dbReference>
<dbReference type="GO" id="GO:0098967">
    <property type="term" value="P:exocytic insertion of neurotransmitter receptor to postsynaptic membrane"/>
    <property type="evidence" value="ECO:0000266"/>
    <property type="project" value="RGD"/>
</dbReference>
<dbReference type="GO" id="GO:0006887">
    <property type="term" value="P:exocytosis"/>
    <property type="evidence" value="ECO:0000266"/>
    <property type="project" value="RGD"/>
</dbReference>
<dbReference type="GO" id="GO:0006886">
    <property type="term" value="P:intracellular protein transport"/>
    <property type="evidence" value="ECO:0000318"/>
    <property type="project" value="GO_Central"/>
</dbReference>
<dbReference type="GO" id="GO:0046907">
    <property type="term" value="P:intracellular transport"/>
    <property type="evidence" value="ECO:0000304"/>
    <property type="project" value="RGD"/>
</dbReference>
<dbReference type="GO" id="GO:0060291">
    <property type="term" value="P:long-term synaptic potentiation"/>
    <property type="evidence" value="ECO:0000266"/>
    <property type="project" value="RGD"/>
</dbReference>
<dbReference type="GO" id="GO:0061025">
    <property type="term" value="P:membrane fusion"/>
    <property type="evidence" value="ECO:0000314"/>
    <property type="project" value="RGD"/>
</dbReference>
<dbReference type="GO" id="GO:0050804">
    <property type="term" value="P:modulation of chemical synaptic transmission"/>
    <property type="evidence" value="ECO:0000266"/>
    <property type="project" value="RGD"/>
</dbReference>
<dbReference type="GO" id="GO:0031175">
    <property type="term" value="P:neuron projection development"/>
    <property type="evidence" value="ECO:0000314"/>
    <property type="project" value="HGNC-UCL"/>
</dbReference>
<dbReference type="GO" id="GO:0090174">
    <property type="term" value="P:organelle membrane fusion"/>
    <property type="evidence" value="ECO:0000250"/>
    <property type="project" value="UniProtKB"/>
</dbReference>
<dbReference type="GO" id="GO:0045785">
    <property type="term" value="P:positive regulation of cell adhesion"/>
    <property type="evidence" value="ECO:0000266"/>
    <property type="project" value="RGD"/>
</dbReference>
<dbReference type="GO" id="GO:0008284">
    <property type="term" value="P:positive regulation of cell population proliferation"/>
    <property type="evidence" value="ECO:0000266"/>
    <property type="project" value="RGD"/>
</dbReference>
<dbReference type="GO" id="GO:0050921">
    <property type="term" value="P:positive regulation of chemotaxis"/>
    <property type="evidence" value="ECO:0000266"/>
    <property type="project" value="RGD"/>
</dbReference>
<dbReference type="GO" id="GO:2000010">
    <property type="term" value="P:positive regulation of protein localization to cell surface"/>
    <property type="evidence" value="ECO:0000266"/>
    <property type="project" value="RGD"/>
</dbReference>
<dbReference type="GO" id="GO:1903078">
    <property type="term" value="P:positive regulation of protein localization to plasma membrane"/>
    <property type="evidence" value="ECO:0000266"/>
    <property type="project" value="RGD"/>
</dbReference>
<dbReference type="GO" id="GO:0010468">
    <property type="term" value="P:regulation of gene expression"/>
    <property type="evidence" value="ECO:0000250"/>
    <property type="project" value="UniProtKB"/>
</dbReference>
<dbReference type="GO" id="GO:0016081">
    <property type="term" value="P:synaptic vesicle docking"/>
    <property type="evidence" value="ECO:0000304"/>
    <property type="project" value="RGD"/>
</dbReference>
<dbReference type="GO" id="GO:0048278">
    <property type="term" value="P:vesicle docking"/>
    <property type="evidence" value="ECO:0000318"/>
    <property type="project" value="GO_Central"/>
</dbReference>
<dbReference type="GO" id="GO:0006906">
    <property type="term" value="P:vesicle fusion"/>
    <property type="evidence" value="ECO:0000318"/>
    <property type="project" value="GO_Central"/>
</dbReference>
<dbReference type="GO" id="GO:0016192">
    <property type="term" value="P:vesicle-mediated transport"/>
    <property type="evidence" value="ECO:0000304"/>
    <property type="project" value="RGD"/>
</dbReference>
<dbReference type="GO" id="GO:0099003">
    <property type="term" value="P:vesicle-mediated transport in synapse"/>
    <property type="evidence" value="ECO:0000266"/>
    <property type="project" value="RGD"/>
</dbReference>
<dbReference type="CDD" id="cd15881">
    <property type="entry name" value="SNARE_syntaxin3"/>
    <property type="match status" value="1"/>
</dbReference>
<dbReference type="CDD" id="cd00179">
    <property type="entry name" value="SynN"/>
    <property type="match status" value="1"/>
</dbReference>
<dbReference type="FunFam" id="1.20.5.110:FF:000023">
    <property type="entry name" value="Syntaxin 3"/>
    <property type="match status" value="1"/>
</dbReference>
<dbReference type="FunFam" id="1.20.58.70:FF:000001">
    <property type="entry name" value="Syntaxin 3"/>
    <property type="match status" value="1"/>
</dbReference>
<dbReference type="Gene3D" id="1.20.5.110">
    <property type="match status" value="1"/>
</dbReference>
<dbReference type="Gene3D" id="1.20.58.70">
    <property type="match status" value="1"/>
</dbReference>
<dbReference type="InterPro" id="IPR010989">
    <property type="entry name" value="SNARE"/>
</dbReference>
<dbReference type="InterPro" id="IPR031186">
    <property type="entry name" value="STX3_SNARE"/>
</dbReference>
<dbReference type="InterPro" id="IPR045242">
    <property type="entry name" value="Syntaxin"/>
</dbReference>
<dbReference type="InterPro" id="IPR006012">
    <property type="entry name" value="Syntaxin/epimorphin_CS"/>
</dbReference>
<dbReference type="InterPro" id="IPR006011">
    <property type="entry name" value="Syntaxin_N"/>
</dbReference>
<dbReference type="InterPro" id="IPR000727">
    <property type="entry name" value="T_SNARE_dom"/>
</dbReference>
<dbReference type="PANTHER" id="PTHR19957">
    <property type="entry name" value="SYNTAXIN"/>
    <property type="match status" value="1"/>
</dbReference>
<dbReference type="PANTHER" id="PTHR19957:SF34">
    <property type="entry name" value="SYNTAXIN-3"/>
    <property type="match status" value="1"/>
</dbReference>
<dbReference type="Pfam" id="PF05739">
    <property type="entry name" value="SNARE"/>
    <property type="match status" value="1"/>
</dbReference>
<dbReference type="Pfam" id="PF00804">
    <property type="entry name" value="Syntaxin"/>
    <property type="match status" value="1"/>
</dbReference>
<dbReference type="SMART" id="SM00503">
    <property type="entry name" value="SynN"/>
    <property type="match status" value="1"/>
</dbReference>
<dbReference type="SMART" id="SM00397">
    <property type="entry name" value="t_SNARE"/>
    <property type="match status" value="1"/>
</dbReference>
<dbReference type="SUPFAM" id="SSF47661">
    <property type="entry name" value="t-snare proteins"/>
    <property type="match status" value="1"/>
</dbReference>
<dbReference type="PROSITE" id="PS00914">
    <property type="entry name" value="SYNTAXIN"/>
    <property type="match status" value="1"/>
</dbReference>
<dbReference type="PROSITE" id="PS50192">
    <property type="entry name" value="T_SNARE"/>
    <property type="match status" value="1"/>
</dbReference>
<accession>Q08849</accession>
<comment type="function">
    <text evidence="1">Potentially involved in docking of synaptic vesicles at presynaptic active zones. Apical receptor involved in membrane fusion of apical vesicles. Essential for survival of retinal photoreceetors.</text>
</comment>
<comment type="subunit">
    <text evidence="2">Interacts with REEP6 (By similarity). Interacts with PRPH2 in rod and cone photoreceptors (By similarity). Interacts with ROM1 (By similarity). Interacts with SNAP25 (By similarity). Interacts with VAMP2 (By similarity).</text>
</comment>
<comment type="interaction">
    <interactant intactId="EBI-8311156">
        <id>Q08849</id>
    </interactant>
    <interactant intactId="EBI-1027214">
        <id>P60881</id>
        <label>Snap25</label>
    </interactant>
    <organismsDiffer>false</organismsDiffer>
    <experiments>4</experiments>
</comment>
<comment type="subcellular location">
    <subcellularLocation>
        <location evidence="5">Membrane</location>
        <topology evidence="5">Single-pass type IV membrane protein</topology>
    </subcellularLocation>
    <text evidence="2">Localized to the inner and outer plexiform layers, the cell body and the inner segments of photoreceptors.</text>
</comment>
<comment type="tissue specificity">
    <text>Heart, spleen, lung and kidney.</text>
</comment>
<comment type="similarity">
    <text evidence="5">Belongs to the syntaxin family.</text>
</comment>
<reference key="1">
    <citation type="journal article" date="1993" name="Cell">
        <title>The syntaxin family of vesicular transport receptors.</title>
        <authorList>
            <person name="Bennett M.K."/>
            <person name="Garcia-Arraras J.E."/>
            <person name="Elferink L.A."/>
            <person name="Peterson K.E."/>
            <person name="Fleming A.M."/>
            <person name="Hazuka C.D."/>
            <person name="Scheller R.H."/>
        </authorList>
    </citation>
    <scope>NUCLEOTIDE SEQUENCE [MRNA]</scope>
</reference>
<gene>
    <name type="primary">Stx3</name>
    <name type="synonym">Stx3a</name>
</gene>
<sequence>MKDRLEQLKAKQLTQDDDTDEVEIAIDNTAFMDEFFSEIEETRLNIDKISEHVEEAKKLYSIILSAPIPEPKTKDDLEQLTTEIKKRANNVRNKLKSMEKHIEEDEVRSSADLRIRKSQHSVLSRKFVEVMTKYNEAQVDFRERSKGRIQRQLEITGKKTTDEELEEMLESGNPAIFTSGIIDSQISKQALSEIEGRHKDIVRLESSIKELHDMFMDIAMLVENQGEMLDNIELNVMHTVDHVEKARDETKRAMKYQGQARKKLIIIIVIVVVLLGILALIIGLSVGLK</sequence>